<reference key="1">
    <citation type="journal article" date="2000" name="Mamm. Genome">
        <title>Genomic cloning, chromosomal mapping, and expression analysis of Msal-2.</title>
        <authorList>
            <person name="Kohlhase J."/>
            <person name="Altmann M."/>
            <person name="Archangelo L."/>
            <person name="Dixkens C."/>
            <person name="Engel W."/>
        </authorList>
    </citation>
    <scope>NUCLEOTIDE SEQUENCE [MRNA]</scope>
    <source>
        <tissue>Brain</tissue>
    </source>
</reference>
<reference key="2">
    <citation type="journal article" date="2004" name="Genome Res.">
        <title>The status, quality, and expansion of the NIH full-length cDNA project: the Mammalian Gene Collection (MGC).</title>
        <authorList>
            <consortium name="The MGC Project Team"/>
        </authorList>
    </citation>
    <scope>NUCLEOTIDE SEQUENCE [LARGE SCALE MRNA]</scope>
    <source>
        <strain>C57BL/6J</strain>
        <tissue>Brain</tissue>
    </source>
</reference>
<reference key="3">
    <citation type="journal article" date="2004" name="Mol. Cell. Proteomics">
        <title>Phosphoproteomic analysis of the developing mouse brain.</title>
        <authorList>
            <person name="Ballif B.A."/>
            <person name="Villen J."/>
            <person name="Beausoleil S.A."/>
            <person name="Schwartz D."/>
            <person name="Gygi S.P."/>
        </authorList>
    </citation>
    <scope>PHOSPHORYLATION [LARGE SCALE ANALYSIS] AT SER-803</scope>
    <scope>IDENTIFICATION BY MASS SPECTROMETRY [LARGE SCALE ANALYSIS]</scope>
    <source>
        <tissue>Embryonic brain</tissue>
    </source>
</reference>
<reference key="4">
    <citation type="journal article" date="2006" name="Dev. Biol.">
        <title>The vertebrate spalt genes in development and disease.</title>
        <authorList>
            <person name="Sweetman D."/>
            <person name="Muensterberg A."/>
        </authorList>
    </citation>
    <scope>DOMAIN</scope>
</reference>
<reference key="5">
    <citation type="journal article" date="2014" name="Hum. Mol. Genet.">
        <title>Mutation of SALL2 causes recessive ocular coloboma in humans and mice.</title>
        <authorList>
            <person name="Kelberman D."/>
            <person name="Islam L."/>
            <person name="Lakowski J."/>
            <person name="Bacchelli C."/>
            <person name="Chanudet E."/>
            <person name="Lescai F."/>
            <person name="Patel A."/>
            <person name="Stupka E."/>
            <person name="Buck A."/>
            <person name="Wolf S."/>
            <person name="Beales P.L."/>
            <person name="Jacques T.S."/>
            <person name="Bitner-Glindzicz M."/>
            <person name="Liasis A."/>
            <person name="Lehmann O.J."/>
            <person name="Kohlhase J."/>
            <person name="Nischal K.K."/>
            <person name="Sowden J.C."/>
        </authorList>
    </citation>
    <scope>FUNCTION</scope>
    <scope>DISRUPTION PHENOTYPE</scope>
</reference>
<evidence type="ECO:0000250" key="1">
    <source>
        <dbReference type="UniProtKB" id="Q9Y467"/>
    </source>
</evidence>
<evidence type="ECO:0000255" key="2">
    <source>
        <dbReference type="PROSITE-ProRule" id="PRU00042"/>
    </source>
</evidence>
<evidence type="ECO:0000256" key="3">
    <source>
        <dbReference type="SAM" id="MobiDB-lite"/>
    </source>
</evidence>
<evidence type="ECO:0000269" key="4">
    <source>
    </source>
</evidence>
<evidence type="ECO:0000303" key="5">
    <source>
    </source>
</evidence>
<evidence type="ECO:0000305" key="6"/>
<evidence type="ECO:0007744" key="7">
    <source>
    </source>
</evidence>
<sequence length="1004" mass="104944">MSRRKQRRPQQLISDCEGPSASENGDASEEDHPQVCAKCCAQFSDPTEFLAHQNSCCTDPPVMVIIGGQENPSNSSASSAPRPEGHSRSQVMDTEHSNPPDSGSSGAPDPTWGPERRGEESSGQFLVAATGTAAGGGGGLILASPKLGATPLPPESTPAPPPPPPPPPPPGVGSGHLNIPLILEELRVLQQRQIHQMQMTEQICRQVLLLGSLGQTVGAPASPSELPGTGAASSTKPLLPLFSPIKPAQTGKTLASSSSSSSSSGAEPPKQAFFHLYHPLGSQHPFSVGGVGRSHKPTPAPSPALPGSTDQLIASPHLAFPGTTGLLAAQCLGAARGLEAAASPGLLKPKNGSGELGYGEVISSLEKPGGRHKCRFCAKVFGSDSALQIHLRSHTGERPYKCNVCGNRFTTRGNLKVHFHRHREKYPHVQMNPHPVPEHLDYVITSSGLPYGMSVPPEKAEEEAGTPGGGVERKPLVASTTALSATESLTLLSTGTSTAVAPGLPTFNKFVLMKAVEPKSKADENTPPGSEGSAIAGVADSGSATRMQLSKLVTSLPSWALLTNHLKSTGSFPFPYVLEPLGASPSETSKLQQLVEKIDRQGAVAVASTASGAPTTSAPAPSSSASGPNQCVICLRVLSCPRALRLHYGQHGGERPFKCKVCGRAFSTRGNLRAHFVGHKTSPAARAQNSCPICQKKFTNAVTLQQHVRMHLGGQIPNGGSALSEGGGAAQENSSEQSTASGPGSFPQPQSQQPSPEEEMSEEEEEDEEEEEDVTDEDSLAGRGSESGGEKAISVRGDSEEVSGAEEEVATSVAAPTTVKEMDSNEKAPQHTLPPPPPPPDNLDHPQPMEQGTSDVSGAMEEEAKLEGTSSPMAALTQEGEGTSTPLVEELNLPEAMKKDPGESSGRKACEVCGQSFPTQTALEEHQKTHPKDGPLFTCVFCRQGFLDRATLKKHMLLAHHQVPPFAPHGPQNIATLSLVPGCSSSIPSPGLSPFPRKDDPTMP</sequence>
<gene>
    <name type="primary">Sall2</name>
    <name type="synonym">Sal2</name>
</gene>
<accession>Q9QX96</accession>
<accession>Q5U3X1</accession>
<comment type="function">
    <text evidence="4">Probable transcription factor that plays a role in eye development before, during, and after optic fissure closure.</text>
</comment>
<comment type="subcellular location">
    <subcellularLocation>
        <location evidence="6">Nucleus</location>
    </subcellularLocation>
</comment>
<comment type="tissue specificity">
    <text>Expressed throughout embryonic development. In adult predominantly in brain.</text>
</comment>
<comment type="disruption phenotype">
    <text evidence="4">No overt phenotypic abnormalities. Histologic analysis of the eyes reveales a colobomatous phenotype, with delayed apposition of the optic fissure margins and persistence of an anterior retinal coloboma phenotype after birth. Deficient embryos display correct posterior closure toward the optic nerve head, and upon contact of the fissure margins, dissolution of the basal lamina occurs and PAX2, known to be critical for this process, is expressed normally. Anterior closure is disrupted with the fissure margins failing to meet, or in some cases misaligning leading to a retinal lesion.</text>
</comment>
<comment type="similarity">
    <text evidence="6">Belongs to the sal C2H2-type zinc-finger protein family.</text>
</comment>
<keyword id="KW-0238">DNA-binding</keyword>
<keyword id="KW-1017">Isopeptide bond</keyword>
<keyword id="KW-0479">Metal-binding</keyword>
<keyword id="KW-0539">Nucleus</keyword>
<keyword id="KW-0597">Phosphoprotein</keyword>
<keyword id="KW-1185">Reference proteome</keyword>
<keyword id="KW-0677">Repeat</keyword>
<keyword id="KW-0804">Transcription</keyword>
<keyword id="KW-0805">Transcription regulation</keyword>
<keyword id="KW-0832">Ubl conjugation</keyword>
<keyword id="KW-0862">Zinc</keyword>
<keyword id="KW-0863">Zinc-finger</keyword>
<protein>
    <recommendedName>
        <fullName>Sal-like protein 2</fullName>
    </recommendedName>
    <alternativeName>
        <fullName>Spalt-like protein 2</fullName>
    </alternativeName>
    <alternativeName>
        <fullName>Zinc finger protein Spalt-2</fullName>
        <shortName>Sal-2</shortName>
        <shortName>mSal-2</shortName>
    </alternativeName>
</protein>
<organism>
    <name type="scientific">Mus musculus</name>
    <name type="common">Mouse</name>
    <dbReference type="NCBI Taxonomy" id="10090"/>
    <lineage>
        <taxon>Eukaryota</taxon>
        <taxon>Metazoa</taxon>
        <taxon>Chordata</taxon>
        <taxon>Craniata</taxon>
        <taxon>Vertebrata</taxon>
        <taxon>Euteleostomi</taxon>
        <taxon>Mammalia</taxon>
        <taxon>Eutheria</taxon>
        <taxon>Euarchontoglires</taxon>
        <taxon>Glires</taxon>
        <taxon>Rodentia</taxon>
        <taxon>Myomorpha</taxon>
        <taxon>Muroidea</taxon>
        <taxon>Muridae</taxon>
        <taxon>Murinae</taxon>
        <taxon>Mus</taxon>
        <taxon>Mus</taxon>
    </lineage>
</organism>
<name>SALL2_MOUSE</name>
<feature type="chain" id="PRO_0000047023" description="Sal-like protein 2">
    <location>
        <begin position="1"/>
        <end position="1004"/>
    </location>
</feature>
<feature type="zinc finger region" description="C2H2-type 1; atypical" evidence="5">
    <location>
        <begin position="34"/>
        <end position="56"/>
    </location>
</feature>
<feature type="zinc finger region" description="C2H2-type 2" evidence="2">
    <location>
        <begin position="372"/>
        <end position="394"/>
    </location>
</feature>
<feature type="zinc finger region" description="C2H2-type 3" evidence="2">
    <location>
        <begin position="400"/>
        <end position="422"/>
    </location>
</feature>
<feature type="zinc finger region" description="C2H2-type 4" evidence="2">
    <location>
        <begin position="629"/>
        <end position="651"/>
    </location>
</feature>
<feature type="zinc finger region" description="C2H2-type 5" evidence="2">
    <location>
        <begin position="657"/>
        <end position="679"/>
    </location>
</feature>
<feature type="zinc finger region" description="C2H2-type 6" evidence="2">
    <location>
        <begin position="689"/>
        <end position="711"/>
    </location>
</feature>
<feature type="zinc finger region" description="C2H2-type 7" evidence="2">
    <location>
        <begin position="908"/>
        <end position="930"/>
    </location>
</feature>
<feature type="zinc finger region" description="C2H2-type 8" evidence="2">
    <location>
        <begin position="937"/>
        <end position="961"/>
    </location>
</feature>
<feature type="region of interest" description="Disordered" evidence="3">
    <location>
        <begin position="1"/>
        <end position="33"/>
    </location>
</feature>
<feature type="region of interest" description="Disordered" evidence="3">
    <location>
        <begin position="51"/>
        <end position="122"/>
    </location>
</feature>
<feature type="region of interest" description="Disordered" evidence="3">
    <location>
        <begin position="137"/>
        <end position="177"/>
    </location>
</feature>
<feature type="region of interest" description="Disordered" evidence="3">
    <location>
        <begin position="220"/>
        <end position="270"/>
    </location>
</feature>
<feature type="region of interest" description="Disordered" evidence="3">
    <location>
        <begin position="285"/>
        <end position="307"/>
    </location>
</feature>
<feature type="region of interest" description="Disordered" evidence="3">
    <location>
        <begin position="712"/>
        <end position="910"/>
    </location>
</feature>
<feature type="compositionally biased region" description="Low complexity" evidence="3">
    <location>
        <begin position="71"/>
        <end position="81"/>
    </location>
</feature>
<feature type="compositionally biased region" description="Basic and acidic residues" evidence="3">
    <location>
        <begin position="83"/>
        <end position="98"/>
    </location>
</feature>
<feature type="compositionally biased region" description="Low complexity" evidence="3">
    <location>
        <begin position="99"/>
        <end position="110"/>
    </location>
</feature>
<feature type="compositionally biased region" description="Pro residues" evidence="3">
    <location>
        <begin position="151"/>
        <end position="171"/>
    </location>
</feature>
<feature type="compositionally biased region" description="Polar residues" evidence="3">
    <location>
        <begin position="731"/>
        <end position="742"/>
    </location>
</feature>
<feature type="compositionally biased region" description="Acidic residues" evidence="3">
    <location>
        <begin position="756"/>
        <end position="779"/>
    </location>
</feature>
<feature type="compositionally biased region" description="Acidic residues" evidence="3">
    <location>
        <begin position="800"/>
        <end position="809"/>
    </location>
</feature>
<feature type="compositionally biased region" description="Low complexity" evidence="3">
    <location>
        <begin position="810"/>
        <end position="819"/>
    </location>
</feature>
<feature type="compositionally biased region" description="Basic and acidic residues" evidence="3">
    <location>
        <begin position="820"/>
        <end position="829"/>
    </location>
</feature>
<feature type="compositionally biased region" description="Pro residues" evidence="3">
    <location>
        <begin position="832"/>
        <end position="841"/>
    </location>
</feature>
<feature type="compositionally biased region" description="Basic and acidic residues" evidence="3">
    <location>
        <begin position="896"/>
        <end position="910"/>
    </location>
</feature>
<feature type="modified residue" description="Phosphoserine" evidence="1">
    <location>
        <position position="243"/>
    </location>
</feature>
<feature type="modified residue" description="Phosphoserine" evidence="1">
    <location>
        <position position="794"/>
    </location>
</feature>
<feature type="modified residue" description="Phosphoserine" evidence="1">
    <location>
        <position position="799"/>
    </location>
</feature>
<feature type="modified residue" description="Phosphoserine" evidence="7">
    <location>
        <position position="803"/>
    </location>
</feature>
<feature type="cross-link" description="Glycyl lysine isopeptide (Lys-Gly) (interchain with G-Cter in ubiquitin)" evidence="1">
    <location>
        <position position="908"/>
    </location>
</feature>
<feature type="sequence conflict" description="In Ref. 1; CAB65274." evidence="6" ref="1">
    <original>R</original>
    <variation>K</variation>
    <location>
        <position position="8"/>
    </location>
</feature>
<feature type="sequence conflict" description="In Ref. 1; CAB65274." evidence="6" ref="1">
    <original>D</original>
    <variation>H</variation>
    <location>
        <position position="31"/>
    </location>
</feature>
<feature type="sequence conflict" description="In Ref. 1; CAB65274." evidence="6" ref="1">
    <original>A</original>
    <variation>P</variation>
    <location>
        <position position="107"/>
    </location>
</feature>
<feature type="sequence conflict" description="In Ref. 1; CAB65274." evidence="6" ref="1">
    <original>E</original>
    <variation>K</variation>
    <location>
        <position position="225"/>
    </location>
</feature>
<feature type="sequence conflict" description="In Ref. 1; CAB65274." evidence="6" ref="1">
    <original>T</original>
    <variation>I</variation>
    <location>
        <position position="869"/>
    </location>
</feature>
<proteinExistence type="evidence at protein level"/>
<dbReference type="EMBL" id="AJ007396">
    <property type="protein sequence ID" value="CAB65274.1"/>
    <property type="molecule type" value="mRNA"/>
</dbReference>
<dbReference type="EMBL" id="BC085361">
    <property type="protein sequence ID" value="AAH85361.1"/>
    <property type="molecule type" value="mRNA"/>
</dbReference>
<dbReference type="CCDS" id="CCDS27054.1"/>
<dbReference type="RefSeq" id="NP_001231845.1">
    <property type="nucleotide sequence ID" value="NM_001244916.1"/>
</dbReference>
<dbReference type="RefSeq" id="NP_056587.2">
    <property type="nucleotide sequence ID" value="NM_015772.3"/>
</dbReference>
<dbReference type="SMR" id="Q9QX96"/>
<dbReference type="BioGRID" id="206051">
    <property type="interactions" value="2"/>
</dbReference>
<dbReference type="FunCoup" id="Q9QX96">
    <property type="interactions" value="884"/>
</dbReference>
<dbReference type="IntAct" id="Q9QX96">
    <property type="interactions" value="3"/>
</dbReference>
<dbReference type="MINT" id="Q9QX96"/>
<dbReference type="STRING" id="10090.ENSMUSP00000056401"/>
<dbReference type="GlyGen" id="Q9QX96">
    <property type="glycosylation" value="2 sites"/>
</dbReference>
<dbReference type="iPTMnet" id="Q9QX96"/>
<dbReference type="PhosphoSitePlus" id="Q9QX96"/>
<dbReference type="jPOST" id="Q9QX96"/>
<dbReference type="PaxDb" id="10090-ENSMUSP00000056401"/>
<dbReference type="ProteomicsDB" id="256829"/>
<dbReference type="Antibodypedia" id="22191">
    <property type="antibodies" value="96 antibodies from 20 providers"/>
</dbReference>
<dbReference type="DNASU" id="50524"/>
<dbReference type="Ensembl" id="ENSMUST00000058326.6">
    <property type="protein sequence ID" value="ENSMUSP00000056401.5"/>
    <property type="gene ID" value="ENSMUSG00000049532.12"/>
</dbReference>
<dbReference type="GeneID" id="50524"/>
<dbReference type="KEGG" id="mmu:50524"/>
<dbReference type="UCSC" id="uc007tpf.2">
    <property type="organism name" value="mouse"/>
</dbReference>
<dbReference type="AGR" id="MGI:1354373"/>
<dbReference type="CTD" id="6297"/>
<dbReference type="MGI" id="MGI:1354373">
    <property type="gene designation" value="Sall2"/>
</dbReference>
<dbReference type="VEuPathDB" id="HostDB:ENSMUSG00000049532"/>
<dbReference type="eggNOG" id="KOG1074">
    <property type="taxonomic scope" value="Eukaryota"/>
</dbReference>
<dbReference type="GeneTree" id="ENSGT00940000162245"/>
<dbReference type="HOGENOM" id="CLU_013111_0_0_1"/>
<dbReference type="InParanoid" id="Q9QX96"/>
<dbReference type="OMA" id="STHVWNC"/>
<dbReference type="OrthoDB" id="8749569at2759"/>
<dbReference type="TreeFam" id="TF317003"/>
<dbReference type="BioGRID-ORCS" id="50524">
    <property type="hits" value="5 hits in 76 CRISPR screens"/>
</dbReference>
<dbReference type="ChiTaRS" id="Sall2">
    <property type="organism name" value="mouse"/>
</dbReference>
<dbReference type="PRO" id="PR:Q9QX96"/>
<dbReference type="Proteomes" id="UP000000589">
    <property type="component" value="Chromosome 14"/>
</dbReference>
<dbReference type="RNAct" id="Q9QX96">
    <property type="molecule type" value="protein"/>
</dbReference>
<dbReference type="Bgee" id="ENSMUSG00000049532">
    <property type="expression patterns" value="Expressed in vestibular epithelium and 213 other cell types or tissues"/>
</dbReference>
<dbReference type="ExpressionAtlas" id="Q9QX96">
    <property type="expression patterns" value="baseline and differential"/>
</dbReference>
<dbReference type="GO" id="GO:0005634">
    <property type="term" value="C:nucleus"/>
    <property type="evidence" value="ECO:0007669"/>
    <property type="project" value="UniProtKB-SubCell"/>
</dbReference>
<dbReference type="GO" id="GO:0003677">
    <property type="term" value="F:DNA binding"/>
    <property type="evidence" value="ECO:0007669"/>
    <property type="project" value="UniProtKB-KW"/>
</dbReference>
<dbReference type="GO" id="GO:0044877">
    <property type="term" value="F:protein-containing complex binding"/>
    <property type="evidence" value="ECO:0000353"/>
    <property type="project" value="UniProtKB"/>
</dbReference>
<dbReference type="GO" id="GO:0008270">
    <property type="term" value="F:zinc ion binding"/>
    <property type="evidence" value="ECO:0007669"/>
    <property type="project" value="UniProtKB-KW"/>
</dbReference>
<dbReference type="GO" id="GO:0001654">
    <property type="term" value="P:eye development"/>
    <property type="evidence" value="ECO:0000250"/>
    <property type="project" value="UniProtKB"/>
</dbReference>
<dbReference type="GO" id="GO:0045892">
    <property type="term" value="P:negative regulation of DNA-templated transcription"/>
    <property type="evidence" value="ECO:0000314"/>
    <property type="project" value="UniProtKB"/>
</dbReference>
<dbReference type="GO" id="GO:0000122">
    <property type="term" value="P:negative regulation of transcription by RNA polymerase II"/>
    <property type="evidence" value="ECO:0000314"/>
    <property type="project" value="UniProtKB"/>
</dbReference>
<dbReference type="GO" id="GO:0021915">
    <property type="term" value="P:neural tube development"/>
    <property type="evidence" value="ECO:0000315"/>
    <property type="project" value="MGI"/>
</dbReference>
<dbReference type="CDD" id="cd20908">
    <property type="entry name" value="SUF4-like"/>
    <property type="match status" value="1"/>
</dbReference>
<dbReference type="FunFam" id="3.30.160.60:FF:000556">
    <property type="entry name" value="sal-like protein 2 isoform X2"/>
    <property type="match status" value="1"/>
</dbReference>
<dbReference type="FunFam" id="3.30.160.60:FF:000574">
    <property type="entry name" value="sal-like protein 2 isoform X2"/>
    <property type="match status" value="1"/>
</dbReference>
<dbReference type="FunFam" id="3.30.160.60:FF:000832">
    <property type="entry name" value="sal-like protein 2 isoform X2"/>
    <property type="match status" value="1"/>
</dbReference>
<dbReference type="FunFam" id="3.30.160.60:FF:000215">
    <property type="entry name" value="Spalt-like transcription factor 3"/>
    <property type="match status" value="1"/>
</dbReference>
<dbReference type="Gene3D" id="3.30.160.60">
    <property type="entry name" value="Classic Zinc Finger"/>
    <property type="match status" value="4"/>
</dbReference>
<dbReference type="InterPro" id="IPR051565">
    <property type="entry name" value="Sal_C2H2-zinc-finger"/>
</dbReference>
<dbReference type="InterPro" id="IPR036236">
    <property type="entry name" value="Znf_C2H2_sf"/>
</dbReference>
<dbReference type="InterPro" id="IPR013087">
    <property type="entry name" value="Znf_C2H2_type"/>
</dbReference>
<dbReference type="PANTHER" id="PTHR23233">
    <property type="entry name" value="SAL-LIKE PROTEIN"/>
    <property type="match status" value="1"/>
</dbReference>
<dbReference type="PANTHER" id="PTHR23233:SF15">
    <property type="entry name" value="SAL-LIKE PROTEIN 2"/>
    <property type="match status" value="1"/>
</dbReference>
<dbReference type="Pfam" id="PF00096">
    <property type="entry name" value="zf-C2H2"/>
    <property type="match status" value="3"/>
</dbReference>
<dbReference type="Pfam" id="PF13912">
    <property type="entry name" value="zf-C2H2_6"/>
    <property type="match status" value="1"/>
</dbReference>
<dbReference type="SMART" id="SM00355">
    <property type="entry name" value="ZnF_C2H2"/>
    <property type="match status" value="7"/>
</dbReference>
<dbReference type="SUPFAM" id="SSF57667">
    <property type="entry name" value="beta-beta-alpha zinc fingers"/>
    <property type="match status" value="3"/>
</dbReference>
<dbReference type="PROSITE" id="PS00028">
    <property type="entry name" value="ZINC_FINGER_C2H2_1"/>
    <property type="match status" value="7"/>
</dbReference>
<dbReference type="PROSITE" id="PS50157">
    <property type="entry name" value="ZINC_FINGER_C2H2_2"/>
    <property type="match status" value="7"/>
</dbReference>